<keyword id="KW-0131">Cell cycle</keyword>
<keyword id="KW-0132">Cell division</keyword>
<keyword id="KW-0159">Chromosome partition</keyword>
<keyword id="KW-0963">Cytoplasm</keyword>
<keyword id="KW-1185">Reference proteome</keyword>
<name>SCPB_RUMCH</name>
<reference key="1">
    <citation type="submission" date="2009-01" db="EMBL/GenBank/DDBJ databases">
        <title>Complete sequence of Clostridium cellulolyticum H10.</title>
        <authorList>
            <consortium name="US DOE Joint Genome Institute"/>
            <person name="Lucas S."/>
            <person name="Copeland A."/>
            <person name="Lapidus A."/>
            <person name="Glavina del Rio T."/>
            <person name="Dalin E."/>
            <person name="Tice H."/>
            <person name="Bruce D."/>
            <person name="Goodwin L."/>
            <person name="Pitluck S."/>
            <person name="Chertkov O."/>
            <person name="Saunders E."/>
            <person name="Brettin T."/>
            <person name="Detter J.C."/>
            <person name="Han C."/>
            <person name="Larimer F."/>
            <person name="Land M."/>
            <person name="Hauser L."/>
            <person name="Kyrpides N."/>
            <person name="Ivanova N."/>
            <person name="Zhou J."/>
            <person name="Richardson P."/>
        </authorList>
    </citation>
    <scope>NUCLEOTIDE SEQUENCE [LARGE SCALE GENOMIC DNA]</scope>
    <source>
        <strain>ATCC 35319 / DSM 5812 / JCM 6584 / H10</strain>
    </source>
</reference>
<protein>
    <recommendedName>
        <fullName evidence="1">Segregation and condensation protein B</fullName>
    </recommendedName>
</protein>
<sequence>MEISTIECVIESLIFSYGDPLPLDKICEILELDKKTARSILKNMMDSYNNSNRGIIIREINEKYQMCSKPEYFDYVSKLYQIRQKQALSQAAYEVLAIIAYNQPITRAKIEQIRGVNSDSAVTRLTERNLIKEAGKLDVPGRPRLYETTDEFLRCFGFKSIRDLPLLDIDDLNELNLQELVEEFDEEGNK</sequence>
<organism>
    <name type="scientific">Ruminiclostridium cellulolyticum (strain ATCC 35319 / DSM 5812 / JCM 6584 / H10)</name>
    <name type="common">Clostridium cellulolyticum</name>
    <dbReference type="NCBI Taxonomy" id="394503"/>
    <lineage>
        <taxon>Bacteria</taxon>
        <taxon>Bacillati</taxon>
        <taxon>Bacillota</taxon>
        <taxon>Clostridia</taxon>
        <taxon>Eubacteriales</taxon>
        <taxon>Oscillospiraceae</taxon>
        <taxon>Ruminiclostridium</taxon>
    </lineage>
</organism>
<proteinExistence type="inferred from homology"/>
<comment type="function">
    <text evidence="1">Participates in chromosomal partition during cell division. May act via the formation of a condensin-like complex containing Smc and ScpA that pull DNA away from mid-cell into both cell halves.</text>
</comment>
<comment type="subunit">
    <text evidence="1">Homodimer. Homodimerization may be required to stabilize the binding of ScpA to the Smc head domains. Component of a cohesin-like complex composed of ScpA, ScpB and the Smc homodimer, in which ScpA and ScpB bind to the head domain of Smc. The presence of the three proteins is required for the association of the complex with DNA.</text>
</comment>
<comment type="subcellular location">
    <subcellularLocation>
        <location evidence="1">Cytoplasm</location>
    </subcellularLocation>
    <text evidence="1">Associated with two foci at the outer edges of the nucleoid region in young cells, and at four foci within both cell halves in older cells.</text>
</comment>
<comment type="similarity">
    <text evidence="1">Belongs to the ScpB family.</text>
</comment>
<evidence type="ECO:0000255" key="1">
    <source>
        <dbReference type="HAMAP-Rule" id="MF_01804"/>
    </source>
</evidence>
<gene>
    <name evidence="1" type="primary">scpB</name>
    <name type="ordered locus">Ccel_1746</name>
</gene>
<feature type="chain" id="PRO_1000187536" description="Segregation and condensation protein B">
    <location>
        <begin position="1"/>
        <end position="190"/>
    </location>
</feature>
<accession>B8I2V4</accession>
<dbReference type="EMBL" id="CP001348">
    <property type="protein sequence ID" value="ACL76097.1"/>
    <property type="molecule type" value="Genomic_DNA"/>
</dbReference>
<dbReference type="RefSeq" id="WP_015925212.1">
    <property type="nucleotide sequence ID" value="NC_011898.1"/>
</dbReference>
<dbReference type="SMR" id="B8I2V4"/>
<dbReference type="STRING" id="394503.Ccel_1746"/>
<dbReference type="KEGG" id="cce:Ccel_1746"/>
<dbReference type="eggNOG" id="COG1386">
    <property type="taxonomic scope" value="Bacteria"/>
</dbReference>
<dbReference type="HOGENOM" id="CLU_045647_5_3_9"/>
<dbReference type="OrthoDB" id="9806226at2"/>
<dbReference type="Proteomes" id="UP000001349">
    <property type="component" value="Chromosome"/>
</dbReference>
<dbReference type="GO" id="GO:0005737">
    <property type="term" value="C:cytoplasm"/>
    <property type="evidence" value="ECO:0007669"/>
    <property type="project" value="UniProtKB-SubCell"/>
</dbReference>
<dbReference type="GO" id="GO:0051301">
    <property type="term" value="P:cell division"/>
    <property type="evidence" value="ECO:0007669"/>
    <property type="project" value="UniProtKB-KW"/>
</dbReference>
<dbReference type="GO" id="GO:0051304">
    <property type="term" value="P:chromosome separation"/>
    <property type="evidence" value="ECO:0007669"/>
    <property type="project" value="InterPro"/>
</dbReference>
<dbReference type="GO" id="GO:0006260">
    <property type="term" value="P:DNA replication"/>
    <property type="evidence" value="ECO:0007669"/>
    <property type="project" value="UniProtKB-UniRule"/>
</dbReference>
<dbReference type="Gene3D" id="1.10.10.10">
    <property type="entry name" value="Winged helix-like DNA-binding domain superfamily/Winged helix DNA-binding domain"/>
    <property type="match status" value="2"/>
</dbReference>
<dbReference type="HAMAP" id="MF_01804">
    <property type="entry name" value="ScpB"/>
    <property type="match status" value="1"/>
</dbReference>
<dbReference type="InterPro" id="IPR005234">
    <property type="entry name" value="ScpB_csome_segregation"/>
</dbReference>
<dbReference type="InterPro" id="IPR036388">
    <property type="entry name" value="WH-like_DNA-bd_sf"/>
</dbReference>
<dbReference type="InterPro" id="IPR036390">
    <property type="entry name" value="WH_DNA-bd_sf"/>
</dbReference>
<dbReference type="NCBIfam" id="TIGR00281">
    <property type="entry name" value="SMC-Scp complex subunit ScpB"/>
    <property type="match status" value="1"/>
</dbReference>
<dbReference type="PANTHER" id="PTHR34298">
    <property type="entry name" value="SEGREGATION AND CONDENSATION PROTEIN B"/>
    <property type="match status" value="1"/>
</dbReference>
<dbReference type="PANTHER" id="PTHR34298:SF2">
    <property type="entry name" value="SEGREGATION AND CONDENSATION PROTEIN B"/>
    <property type="match status" value="1"/>
</dbReference>
<dbReference type="Pfam" id="PF04079">
    <property type="entry name" value="SMC_ScpB"/>
    <property type="match status" value="1"/>
</dbReference>
<dbReference type="PIRSF" id="PIRSF019345">
    <property type="entry name" value="ScpB"/>
    <property type="match status" value="1"/>
</dbReference>
<dbReference type="SUPFAM" id="SSF46785">
    <property type="entry name" value="Winged helix' DNA-binding domain"/>
    <property type="match status" value="2"/>
</dbReference>